<reference key="1">
    <citation type="submission" date="2009-02" db="EMBL/GenBank/DDBJ databases">
        <title>Vibrio splendidus str. LGP32 complete genome.</title>
        <authorList>
            <person name="Mazel D."/>
            <person name="Le Roux F."/>
        </authorList>
    </citation>
    <scope>NUCLEOTIDE SEQUENCE [LARGE SCALE GENOMIC DNA]</scope>
    <source>
        <strain>LGP32</strain>
    </source>
</reference>
<accession>B7VIQ7</accession>
<sequence length="150" mass="16729">MTTEQTTMNITEIQELLPHRYPFLMVDRVTSFEKEKTLTAIKNVSVNEPQFTGHFPQLPVFPGVLILEAMAQATGLLAFKSFGAPSGNELYYFASVDKAKFRKPVVPGDQLVIEVEFLKERRGIASFNGVAKVDGVVVCSAELKCARREF</sequence>
<protein>
    <recommendedName>
        <fullName evidence="1">3-hydroxyacyl-[acyl-carrier-protein] dehydratase FabZ</fullName>
        <ecNumber evidence="1">4.2.1.59</ecNumber>
    </recommendedName>
    <alternativeName>
        <fullName evidence="1">(3R)-hydroxymyristoyl-[acyl-carrier-protein] dehydratase</fullName>
        <shortName evidence="1">(3R)-hydroxymyristoyl-ACP dehydrase</shortName>
    </alternativeName>
    <alternativeName>
        <fullName evidence="1">Beta-hydroxyacyl-ACP dehydratase</fullName>
    </alternativeName>
</protein>
<proteinExistence type="inferred from homology"/>
<evidence type="ECO:0000255" key="1">
    <source>
        <dbReference type="HAMAP-Rule" id="MF_00406"/>
    </source>
</evidence>
<comment type="function">
    <text evidence="1">Involved in unsaturated fatty acids biosynthesis. Catalyzes the dehydration of short chain beta-hydroxyacyl-ACPs and long chain saturated and unsaturated beta-hydroxyacyl-ACPs.</text>
</comment>
<comment type="catalytic activity">
    <reaction evidence="1">
        <text>a (3R)-hydroxyacyl-[ACP] = a (2E)-enoyl-[ACP] + H2O</text>
        <dbReference type="Rhea" id="RHEA:13097"/>
        <dbReference type="Rhea" id="RHEA-COMP:9925"/>
        <dbReference type="Rhea" id="RHEA-COMP:9945"/>
        <dbReference type="ChEBI" id="CHEBI:15377"/>
        <dbReference type="ChEBI" id="CHEBI:78784"/>
        <dbReference type="ChEBI" id="CHEBI:78827"/>
        <dbReference type="EC" id="4.2.1.59"/>
    </reaction>
</comment>
<comment type="subcellular location">
    <subcellularLocation>
        <location evidence="1">Cytoplasm</location>
    </subcellularLocation>
</comment>
<comment type="similarity">
    <text evidence="1">Belongs to the thioester dehydratase family. FabZ subfamily.</text>
</comment>
<organism>
    <name type="scientific">Vibrio atlanticus (strain LGP32)</name>
    <name type="common">Vibrio splendidus (strain Mel32)</name>
    <dbReference type="NCBI Taxonomy" id="575788"/>
    <lineage>
        <taxon>Bacteria</taxon>
        <taxon>Pseudomonadati</taxon>
        <taxon>Pseudomonadota</taxon>
        <taxon>Gammaproteobacteria</taxon>
        <taxon>Vibrionales</taxon>
        <taxon>Vibrionaceae</taxon>
        <taxon>Vibrio</taxon>
    </lineage>
</organism>
<keyword id="KW-0963">Cytoplasm</keyword>
<keyword id="KW-0441">Lipid A biosynthesis</keyword>
<keyword id="KW-0444">Lipid biosynthesis</keyword>
<keyword id="KW-0443">Lipid metabolism</keyword>
<keyword id="KW-0456">Lyase</keyword>
<feature type="chain" id="PRO_1000134723" description="3-hydroxyacyl-[acyl-carrier-protein] dehydratase FabZ">
    <location>
        <begin position="1"/>
        <end position="150"/>
    </location>
</feature>
<feature type="active site" evidence="1">
    <location>
        <position position="54"/>
    </location>
</feature>
<name>FABZ_VIBA3</name>
<gene>
    <name evidence="1" type="primary">fabZ</name>
    <name type="ordered locus">VS_2341</name>
</gene>
<dbReference type="EC" id="4.2.1.59" evidence="1"/>
<dbReference type="EMBL" id="FM954972">
    <property type="protein sequence ID" value="CAV19503.1"/>
    <property type="molecule type" value="Genomic_DNA"/>
</dbReference>
<dbReference type="SMR" id="B7VIQ7"/>
<dbReference type="STRING" id="575788.VS_2341"/>
<dbReference type="KEGG" id="vsp:VS_2341"/>
<dbReference type="eggNOG" id="COG0764">
    <property type="taxonomic scope" value="Bacteria"/>
</dbReference>
<dbReference type="HOGENOM" id="CLU_078912_1_0_6"/>
<dbReference type="Proteomes" id="UP000009100">
    <property type="component" value="Chromosome 1"/>
</dbReference>
<dbReference type="GO" id="GO:0005737">
    <property type="term" value="C:cytoplasm"/>
    <property type="evidence" value="ECO:0007669"/>
    <property type="project" value="UniProtKB-SubCell"/>
</dbReference>
<dbReference type="GO" id="GO:0016020">
    <property type="term" value="C:membrane"/>
    <property type="evidence" value="ECO:0007669"/>
    <property type="project" value="GOC"/>
</dbReference>
<dbReference type="GO" id="GO:0019171">
    <property type="term" value="F:(3R)-hydroxyacyl-[acyl-carrier-protein] dehydratase activity"/>
    <property type="evidence" value="ECO:0007669"/>
    <property type="project" value="UniProtKB-EC"/>
</dbReference>
<dbReference type="GO" id="GO:0006633">
    <property type="term" value="P:fatty acid biosynthetic process"/>
    <property type="evidence" value="ECO:0007669"/>
    <property type="project" value="UniProtKB-UniRule"/>
</dbReference>
<dbReference type="GO" id="GO:0009245">
    <property type="term" value="P:lipid A biosynthetic process"/>
    <property type="evidence" value="ECO:0007669"/>
    <property type="project" value="UniProtKB-UniRule"/>
</dbReference>
<dbReference type="CDD" id="cd01288">
    <property type="entry name" value="FabZ"/>
    <property type="match status" value="1"/>
</dbReference>
<dbReference type="FunFam" id="3.10.129.10:FF:000001">
    <property type="entry name" value="3-hydroxyacyl-[acyl-carrier-protein] dehydratase FabZ"/>
    <property type="match status" value="1"/>
</dbReference>
<dbReference type="Gene3D" id="3.10.129.10">
    <property type="entry name" value="Hotdog Thioesterase"/>
    <property type="match status" value="1"/>
</dbReference>
<dbReference type="HAMAP" id="MF_00406">
    <property type="entry name" value="FabZ"/>
    <property type="match status" value="1"/>
</dbReference>
<dbReference type="InterPro" id="IPR013114">
    <property type="entry name" value="FabA_FabZ"/>
</dbReference>
<dbReference type="InterPro" id="IPR010084">
    <property type="entry name" value="FabZ"/>
</dbReference>
<dbReference type="InterPro" id="IPR029069">
    <property type="entry name" value="HotDog_dom_sf"/>
</dbReference>
<dbReference type="NCBIfam" id="TIGR01750">
    <property type="entry name" value="fabZ"/>
    <property type="match status" value="1"/>
</dbReference>
<dbReference type="NCBIfam" id="NF000582">
    <property type="entry name" value="PRK00006.1"/>
    <property type="match status" value="1"/>
</dbReference>
<dbReference type="PANTHER" id="PTHR30272">
    <property type="entry name" value="3-HYDROXYACYL-[ACYL-CARRIER-PROTEIN] DEHYDRATASE"/>
    <property type="match status" value="1"/>
</dbReference>
<dbReference type="PANTHER" id="PTHR30272:SF1">
    <property type="entry name" value="3-HYDROXYACYL-[ACYL-CARRIER-PROTEIN] DEHYDRATASE"/>
    <property type="match status" value="1"/>
</dbReference>
<dbReference type="Pfam" id="PF07977">
    <property type="entry name" value="FabA"/>
    <property type="match status" value="1"/>
</dbReference>
<dbReference type="SUPFAM" id="SSF54637">
    <property type="entry name" value="Thioesterase/thiol ester dehydrase-isomerase"/>
    <property type="match status" value="1"/>
</dbReference>